<name>SYS_THEYD</name>
<dbReference type="EC" id="6.1.1.11" evidence="1"/>
<dbReference type="EMBL" id="CP001147">
    <property type="protein sequence ID" value="ACI21024.1"/>
    <property type="molecule type" value="Genomic_DNA"/>
</dbReference>
<dbReference type="RefSeq" id="WP_012545752.1">
    <property type="nucleotide sequence ID" value="NC_011296.1"/>
</dbReference>
<dbReference type="RefSeq" id="YP_002247872.1">
    <property type="nucleotide sequence ID" value="NC_011296.1"/>
</dbReference>
<dbReference type="SMR" id="B5YGU2"/>
<dbReference type="FunCoup" id="B5YGU2">
    <property type="interactions" value="434"/>
</dbReference>
<dbReference type="STRING" id="289376.THEYE_A0018"/>
<dbReference type="EnsemblBacteria" id="ACI21024">
    <property type="protein sequence ID" value="ACI21024"/>
    <property type="gene ID" value="THEYE_A0018"/>
</dbReference>
<dbReference type="KEGG" id="tye:THEYE_A0018"/>
<dbReference type="PATRIC" id="fig|289376.4.peg.18"/>
<dbReference type="eggNOG" id="COG0172">
    <property type="taxonomic scope" value="Bacteria"/>
</dbReference>
<dbReference type="HOGENOM" id="CLU_023797_1_1_0"/>
<dbReference type="InParanoid" id="B5YGU2"/>
<dbReference type="OrthoDB" id="9804647at2"/>
<dbReference type="UniPathway" id="UPA00906">
    <property type="reaction ID" value="UER00895"/>
</dbReference>
<dbReference type="Proteomes" id="UP000000718">
    <property type="component" value="Chromosome"/>
</dbReference>
<dbReference type="GO" id="GO:0005737">
    <property type="term" value="C:cytoplasm"/>
    <property type="evidence" value="ECO:0007669"/>
    <property type="project" value="UniProtKB-SubCell"/>
</dbReference>
<dbReference type="GO" id="GO:0005524">
    <property type="term" value="F:ATP binding"/>
    <property type="evidence" value="ECO:0007669"/>
    <property type="project" value="UniProtKB-UniRule"/>
</dbReference>
<dbReference type="GO" id="GO:0004828">
    <property type="term" value="F:serine-tRNA ligase activity"/>
    <property type="evidence" value="ECO:0007669"/>
    <property type="project" value="UniProtKB-UniRule"/>
</dbReference>
<dbReference type="GO" id="GO:0016260">
    <property type="term" value="P:selenocysteine biosynthetic process"/>
    <property type="evidence" value="ECO:0007669"/>
    <property type="project" value="UniProtKB-UniRule"/>
</dbReference>
<dbReference type="GO" id="GO:0006434">
    <property type="term" value="P:seryl-tRNA aminoacylation"/>
    <property type="evidence" value="ECO:0007669"/>
    <property type="project" value="UniProtKB-UniRule"/>
</dbReference>
<dbReference type="CDD" id="cd00770">
    <property type="entry name" value="SerRS_core"/>
    <property type="match status" value="1"/>
</dbReference>
<dbReference type="Gene3D" id="3.30.930.10">
    <property type="entry name" value="Bira Bifunctional Protein, Domain 2"/>
    <property type="match status" value="1"/>
</dbReference>
<dbReference type="Gene3D" id="1.10.287.40">
    <property type="entry name" value="Serine-tRNA synthetase, tRNA binding domain"/>
    <property type="match status" value="1"/>
</dbReference>
<dbReference type="HAMAP" id="MF_00176">
    <property type="entry name" value="Ser_tRNA_synth_type1"/>
    <property type="match status" value="1"/>
</dbReference>
<dbReference type="InterPro" id="IPR002314">
    <property type="entry name" value="aa-tRNA-synt_IIb"/>
</dbReference>
<dbReference type="InterPro" id="IPR006195">
    <property type="entry name" value="aa-tRNA-synth_II"/>
</dbReference>
<dbReference type="InterPro" id="IPR045864">
    <property type="entry name" value="aa-tRNA-synth_II/BPL/LPL"/>
</dbReference>
<dbReference type="InterPro" id="IPR002317">
    <property type="entry name" value="Ser-tRNA-ligase_type_1"/>
</dbReference>
<dbReference type="InterPro" id="IPR015866">
    <property type="entry name" value="Ser-tRNA-synth_1_N"/>
</dbReference>
<dbReference type="InterPro" id="IPR042103">
    <property type="entry name" value="SerRS_1_N_sf"/>
</dbReference>
<dbReference type="InterPro" id="IPR033729">
    <property type="entry name" value="SerRS_core"/>
</dbReference>
<dbReference type="InterPro" id="IPR010978">
    <property type="entry name" value="tRNA-bd_arm"/>
</dbReference>
<dbReference type="NCBIfam" id="TIGR00414">
    <property type="entry name" value="serS"/>
    <property type="match status" value="1"/>
</dbReference>
<dbReference type="PANTHER" id="PTHR43697:SF1">
    <property type="entry name" value="SERINE--TRNA LIGASE"/>
    <property type="match status" value="1"/>
</dbReference>
<dbReference type="PANTHER" id="PTHR43697">
    <property type="entry name" value="SERYL-TRNA SYNTHETASE"/>
    <property type="match status" value="1"/>
</dbReference>
<dbReference type="Pfam" id="PF02403">
    <property type="entry name" value="Seryl_tRNA_N"/>
    <property type="match status" value="1"/>
</dbReference>
<dbReference type="Pfam" id="PF00587">
    <property type="entry name" value="tRNA-synt_2b"/>
    <property type="match status" value="1"/>
</dbReference>
<dbReference type="PIRSF" id="PIRSF001529">
    <property type="entry name" value="Ser-tRNA-synth_IIa"/>
    <property type="match status" value="1"/>
</dbReference>
<dbReference type="PRINTS" id="PR00981">
    <property type="entry name" value="TRNASYNTHSER"/>
</dbReference>
<dbReference type="SUPFAM" id="SSF55681">
    <property type="entry name" value="Class II aaRS and biotin synthetases"/>
    <property type="match status" value="1"/>
</dbReference>
<dbReference type="SUPFAM" id="SSF46589">
    <property type="entry name" value="tRNA-binding arm"/>
    <property type="match status" value="1"/>
</dbReference>
<dbReference type="PROSITE" id="PS50862">
    <property type="entry name" value="AA_TRNA_LIGASE_II"/>
    <property type="match status" value="1"/>
</dbReference>
<proteinExistence type="inferred from homology"/>
<organism>
    <name type="scientific">Thermodesulfovibrio yellowstonii (strain ATCC 51303 / DSM 11347 / YP87)</name>
    <dbReference type="NCBI Taxonomy" id="289376"/>
    <lineage>
        <taxon>Bacteria</taxon>
        <taxon>Pseudomonadati</taxon>
        <taxon>Nitrospirota</taxon>
        <taxon>Thermodesulfovibrionia</taxon>
        <taxon>Thermodesulfovibrionales</taxon>
        <taxon>Thermodesulfovibrionaceae</taxon>
        <taxon>Thermodesulfovibrio</taxon>
    </lineage>
</organism>
<feature type="chain" id="PRO_1000098140" description="Serine--tRNA ligase">
    <location>
        <begin position="1"/>
        <end position="424"/>
    </location>
</feature>
<feature type="binding site" evidence="1">
    <location>
        <begin position="232"/>
        <end position="234"/>
    </location>
    <ligand>
        <name>L-serine</name>
        <dbReference type="ChEBI" id="CHEBI:33384"/>
    </ligand>
</feature>
<feature type="binding site" evidence="1">
    <location>
        <begin position="263"/>
        <end position="265"/>
    </location>
    <ligand>
        <name>ATP</name>
        <dbReference type="ChEBI" id="CHEBI:30616"/>
    </ligand>
</feature>
<feature type="binding site" evidence="1">
    <location>
        <position position="286"/>
    </location>
    <ligand>
        <name>L-serine</name>
        <dbReference type="ChEBI" id="CHEBI:33384"/>
    </ligand>
</feature>
<feature type="binding site" evidence="1">
    <location>
        <begin position="350"/>
        <end position="353"/>
    </location>
    <ligand>
        <name>ATP</name>
        <dbReference type="ChEBI" id="CHEBI:30616"/>
    </ligand>
</feature>
<feature type="binding site" evidence="1">
    <location>
        <position position="386"/>
    </location>
    <ligand>
        <name>L-serine</name>
        <dbReference type="ChEBI" id="CHEBI:33384"/>
    </ligand>
</feature>
<accession>B5YGU2</accession>
<evidence type="ECO:0000255" key="1">
    <source>
        <dbReference type="HAMAP-Rule" id="MF_00176"/>
    </source>
</evidence>
<gene>
    <name evidence="1" type="primary">serS</name>
    <name type="ordered locus">THEYE_A0018</name>
</gene>
<keyword id="KW-0030">Aminoacyl-tRNA synthetase</keyword>
<keyword id="KW-0067">ATP-binding</keyword>
<keyword id="KW-0963">Cytoplasm</keyword>
<keyword id="KW-0436">Ligase</keyword>
<keyword id="KW-0547">Nucleotide-binding</keyword>
<keyword id="KW-0648">Protein biosynthesis</keyword>
<keyword id="KW-1185">Reference proteome</keyword>
<sequence>MLDIKFVRANPEKLKEALDKRGYQIDFEEFLSLERERLLLLREIEQKRAIRNSVSQEIAHLKKLKSDNETIDKLIAEMRKLGEELGSIEQKLREIEDKVQNFLLFLPNIPHDSVPLGKDENENVEIRRWGEPSHFDFEPMNHWDIGEILGIIDFERASKIAGSRFAIMKGMGARLERALINFMLDLHTQKGYIEVLPPILVNKVSMTGTGQLPKFEEDLFKIVDPEFYLIPTAEVPVTNIHREEILSEDELPIYYVSYTPCFRKEAGSHGKDVRGLIRQHQFNKVELVKFVKPEDSYEELESLTRDAEEVLKMLGLPYRVVALCTGDLGFASAKTYDIEVWLPGQGRYREISSCSNFEDFQARRANIRFRRRDKKGTEFVHTLNGSGLAIGRTLVAILENYQQKDGSVIVPEVLRPYMGIDVIR</sequence>
<reference key="1">
    <citation type="submission" date="2008-08" db="EMBL/GenBank/DDBJ databases">
        <title>The complete genome sequence of Thermodesulfovibrio yellowstonii strain ATCC 51303 / DSM 11347 / YP87.</title>
        <authorList>
            <person name="Dodson R.J."/>
            <person name="Durkin A.S."/>
            <person name="Wu M."/>
            <person name="Eisen J."/>
            <person name="Sutton G."/>
        </authorList>
    </citation>
    <scope>NUCLEOTIDE SEQUENCE [LARGE SCALE GENOMIC DNA]</scope>
    <source>
        <strain>ATCC 51303 / DSM 11347 / YP87</strain>
    </source>
</reference>
<comment type="function">
    <text evidence="1">Catalyzes the attachment of serine to tRNA(Ser). Is also able to aminoacylate tRNA(Sec) with serine, to form the misacylated tRNA L-seryl-tRNA(Sec), which will be further converted into selenocysteinyl-tRNA(Sec).</text>
</comment>
<comment type="catalytic activity">
    <reaction evidence="1">
        <text>tRNA(Ser) + L-serine + ATP = L-seryl-tRNA(Ser) + AMP + diphosphate + H(+)</text>
        <dbReference type="Rhea" id="RHEA:12292"/>
        <dbReference type="Rhea" id="RHEA-COMP:9669"/>
        <dbReference type="Rhea" id="RHEA-COMP:9703"/>
        <dbReference type="ChEBI" id="CHEBI:15378"/>
        <dbReference type="ChEBI" id="CHEBI:30616"/>
        <dbReference type="ChEBI" id="CHEBI:33019"/>
        <dbReference type="ChEBI" id="CHEBI:33384"/>
        <dbReference type="ChEBI" id="CHEBI:78442"/>
        <dbReference type="ChEBI" id="CHEBI:78533"/>
        <dbReference type="ChEBI" id="CHEBI:456215"/>
        <dbReference type="EC" id="6.1.1.11"/>
    </reaction>
</comment>
<comment type="catalytic activity">
    <reaction evidence="1">
        <text>tRNA(Sec) + L-serine + ATP = L-seryl-tRNA(Sec) + AMP + diphosphate + H(+)</text>
        <dbReference type="Rhea" id="RHEA:42580"/>
        <dbReference type="Rhea" id="RHEA-COMP:9742"/>
        <dbReference type="Rhea" id="RHEA-COMP:10128"/>
        <dbReference type="ChEBI" id="CHEBI:15378"/>
        <dbReference type="ChEBI" id="CHEBI:30616"/>
        <dbReference type="ChEBI" id="CHEBI:33019"/>
        <dbReference type="ChEBI" id="CHEBI:33384"/>
        <dbReference type="ChEBI" id="CHEBI:78442"/>
        <dbReference type="ChEBI" id="CHEBI:78533"/>
        <dbReference type="ChEBI" id="CHEBI:456215"/>
        <dbReference type="EC" id="6.1.1.11"/>
    </reaction>
</comment>
<comment type="pathway">
    <text evidence="1">Aminoacyl-tRNA biosynthesis; selenocysteinyl-tRNA(Sec) biosynthesis; L-seryl-tRNA(Sec) from L-serine and tRNA(Sec): step 1/1.</text>
</comment>
<comment type="subunit">
    <text evidence="1">Homodimer. The tRNA molecule binds across the dimer.</text>
</comment>
<comment type="subcellular location">
    <subcellularLocation>
        <location evidence="1">Cytoplasm</location>
    </subcellularLocation>
</comment>
<comment type="domain">
    <text evidence="1">Consists of two distinct domains, a catalytic core and a N-terminal extension that is involved in tRNA binding.</text>
</comment>
<comment type="similarity">
    <text evidence="1">Belongs to the class-II aminoacyl-tRNA synthetase family. Type-1 seryl-tRNA synthetase subfamily.</text>
</comment>
<protein>
    <recommendedName>
        <fullName evidence="1">Serine--tRNA ligase</fullName>
        <ecNumber evidence="1">6.1.1.11</ecNumber>
    </recommendedName>
    <alternativeName>
        <fullName evidence="1">Seryl-tRNA synthetase</fullName>
        <shortName evidence="1">SerRS</shortName>
    </alternativeName>
    <alternativeName>
        <fullName evidence="1">Seryl-tRNA(Ser/Sec) synthetase</fullName>
    </alternativeName>
</protein>